<protein>
    <recommendedName>
        <fullName>Pigment epithelium-derived factor</fullName>
        <shortName>PEDF</shortName>
    </recommendedName>
    <alternativeName>
        <fullName>Caspin</fullName>
    </alternativeName>
    <alternativeName>
        <fullName>Serpin F1</fullName>
    </alternativeName>
    <alternativeName>
        <fullName>Stromal cell-derived factor 3</fullName>
        <shortName>SDF-3</shortName>
    </alternativeName>
</protein>
<name>PEDF_MOUSE</name>
<dbReference type="EMBL" id="D50460">
    <property type="protein sequence ID" value="BAA09051.1"/>
    <property type="molecule type" value="mRNA"/>
</dbReference>
<dbReference type="EMBL" id="AF036164">
    <property type="protein sequence ID" value="AAC69271.1"/>
    <property type="molecule type" value="mRNA"/>
</dbReference>
<dbReference type="EMBL" id="D87975">
    <property type="protein sequence ID" value="BAA31978.1"/>
    <property type="molecule type" value="mRNA"/>
</dbReference>
<dbReference type="EMBL" id="AF017055">
    <property type="protein sequence ID" value="AAC05733.1"/>
    <property type="molecule type" value="Genomic_DNA"/>
</dbReference>
<dbReference type="EMBL" id="AF017051">
    <property type="protein sequence ID" value="AAC05733.1"/>
    <property type="status" value="JOINED"/>
    <property type="molecule type" value="Genomic_DNA"/>
</dbReference>
<dbReference type="EMBL" id="AF017052">
    <property type="protein sequence ID" value="AAC05733.1"/>
    <property type="status" value="JOINED"/>
    <property type="molecule type" value="Genomic_DNA"/>
</dbReference>
<dbReference type="EMBL" id="AF017053">
    <property type="protein sequence ID" value="AAC05733.1"/>
    <property type="status" value="JOINED"/>
    <property type="molecule type" value="Genomic_DNA"/>
</dbReference>
<dbReference type="EMBL" id="AF017054">
    <property type="protein sequence ID" value="AAC05733.1"/>
    <property type="status" value="JOINED"/>
    <property type="molecule type" value="Genomic_DNA"/>
</dbReference>
<dbReference type="EMBL" id="AF017057">
    <property type="protein sequence ID" value="AAC05731.1"/>
    <property type="molecule type" value="mRNA"/>
</dbReference>
<dbReference type="EMBL" id="BC019852">
    <property type="protein sequence ID" value="AAH19852.1"/>
    <property type="molecule type" value="mRNA"/>
</dbReference>
<dbReference type="CCDS" id="CCDS25045.1"/>
<dbReference type="RefSeq" id="NP_035470.3">
    <property type="nucleotide sequence ID" value="NM_011340.3"/>
</dbReference>
<dbReference type="PDB" id="6LOS">
    <property type="method" value="X-ray"/>
    <property type="resolution" value="2.48 A"/>
    <property type="chains" value="A=37-416"/>
</dbReference>
<dbReference type="PDBsum" id="6LOS"/>
<dbReference type="SMR" id="P97298"/>
<dbReference type="BioGRID" id="203140">
    <property type="interactions" value="12"/>
</dbReference>
<dbReference type="FunCoup" id="P97298">
    <property type="interactions" value="359"/>
</dbReference>
<dbReference type="IntAct" id="P97298">
    <property type="interactions" value="1"/>
</dbReference>
<dbReference type="MINT" id="P97298"/>
<dbReference type="STRING" id="10090.ENSMUSP00000000769"/>
<dbReference type="MEROPS" id="I04.979"/>
<dbReference type="GlyCosmos" id="P97298">
    <property type="glycosylation" value="1 site, No reported glycans"/>
</dbReference>
<dbReference type="GlyGen" id="P97298">
    <property type="glycosylation" value="1 site"/>
</dbReference>
<dbReference type="PhosphoSitePlus" id="P97298"/>
<dbReference type="CPTAC" id="non-CPTAC-3389"/>
<dbReference type="CPTAC" id="non-CPTAC-3390"/>
<dbReference type="jPOST" id="P97298"/>
<dbReference type="PaxDb" id="10090-ENSMUSP00000000769"/>
<dbReference type="PeptideAtlas" id="P97298"/>
<dbReference type="ProteomicsDB" id="287671"/>
<dbReference type="Pumba" id="P97298"/>
<dbReference type="Antibodypedia" id="865">
    <property type="antibodies" value="663 antibodies from 38 providers"/>
</dbReference>
<dbReference type="DNASU" id="20317"/>
<dbReference type="Ensembl" id="ENSMUST00000000769.14">
    <property type="protein sequence ID" value="ENSMUSP00000000769.8"/>
    <property type="gene ID" value="ENSMUSG00000000753.16"/>
</dbReference>
<dbReference type="GeneID" id="20317"/>
<dbReference type="KEGG" id="mmu:20317"/>
<dbReference type="UCSC" id="uc007kdp.1">
    <property type="organism name" value="mouse"/>
</dbReference>
<dbReference type="AGR" id="MGI:108080"/>
<dbReference type="CTD" id="5176"/>
<dbReference type="MGI" id="MGI:108080">
    <property type="gene designation" value="Serpinf1"/>
</dbReference>
<dbReference type="VEuPathDB" id="HostDB:ENSMUSG00000000753"/>
<dbReference type="eggNOG" id="KOG2392">
    <property type="taxonomic scope" value="Eukaryota"/>
</dbReference>
<dbReference type="GeneTree" id="ENSGT00940000158112"/>
<dbReference type="HOGENOM" id="CLU_023330_3_1_1"/>
<dbReference type="InParanoid" id="P97298"/>
<dbReference type="OMA" id="QEVNNWV"/>
<dbReference type="OrthoDB" id="9995163at2759"/>
<dbReference type="PhylomeDB" id="P97298"/>
<dbReference type="TreeFam" id="TF317350"/>
<dbReference type="BioGRID-ORCS" id="20317">
    <property type="hits" value="4 hits in 78 CRISPR screens"/>
</dbReference>
<dbReference type="ChiTaRS" id="Serpinf1">
    <property type="organism name" value="mouse"/>
</dbReference>
<dbReference type="PRO" id="PR:P97298"/>
<dbReference type="Proteomes" id="UP000000589">
    <property type="component" value="Chromosome 11"/>
</dbReference>
<dbReference type="RNAct" id="P97298">
    <property type="molecule type" value="protein"/>
</dbReference>
<dbReference type="Bgee" id="ENSMUSG00000000753">
    <property type="expression patterns" value="Expressed in vault of skull and 249 other cell types or tissues"/>
</dbReference>
<dbReference type="ExpressionAtlas" id="P97298">
    <property type="expression patterns" value="baseline and differential"/>
</dbReference>
<dbReference type="GO" id="GO:0043203">
    <property type="term" value="C:axon hillock"/>
    <property type="evidence" value="ECO:0007669"/>
    <property type="project" value="Ensembl"/>
</dbReference>
<dbReference type="GO" id="GO:0005604">
    <property type="term" value="C:basement membrane"/>
    <property type="evidence" value="ECO:0007669"/>
    <property type="project" value="Ensembl"/>
</dbReference>
<dbReference type="GO" id="GO:0005576">
    <property type="term" value="C:extracellular region"/>
    <property type="evidence" value="ECO:0000314"/>
    <property type="project" value="UniProtKB"/>
</dbReference>
<dbReference type="GO" id="GO:0005615">
    <property type="term" value="C:extracellular space"/>
    <property type="evidence" value="ECO:0000314"/>
    <property type="project" value="MGI"/>
</dbReference>
<dbReference type="GO" id="GO:0042470">
    <property type="term" value="C:melanosome"/>
    <property type="evidence" value="ECO:0007669"/>
    <property type="project" value="UniProtKB-SubCell"/>
</dbReference>
<dbReference type="GO" id="GO:0048471">
    <property type="term" value="C:perinuclear region of cytoplasm"/>
    <property type="evidence" value="ECO:0007669"/>
    <property type="project" value="Ensembl"/>
</dbReference>
<dbReference type="GO" id="GO:0004867">
    <property type="term" value="F:serine-type endopeptidase inhibitor activity"/>
    <property type="evidence" value="ECO:0007669"/>
    <property type="project" value="InterPro"/>
</dbReference>
<dbReference type="GO" id="GO:0071279">
    <property type="term" value="P:cellular response to cobalt ion"/>
    <property type="evidence" value="ECO:0007669"/>
    <property type="project" value="Ensembl"/>
</dbReference>
<dbReference type="GO" id="GO:0071549">
    <property type="term" value="P:cellular response to dexamethasone stimulus"/>
    <property type="evidence" value="ECO:0007669"/>
    <property type="project" value="Ensembl"/>
</dbReference>
<dbReference type="GO" id="GO:0071333">
    <property type="term" value="P:cellular response to glucose stimulus"/>
    <property type="evidence" value="ECO:0007669"/>
    <property type="project" value="Ensembl"/>
</dbReference>
<dbReference type="GO" id="GO:0071300">
    <property type="term" value="P:cellular response to retinoic acid"/>
    <property type="evidence" value="ECO:0007669"/>
    <property type="project" value="Ensembl"/>
</dbReference>
<dbReference type="GO" id="GO:0060767">
    <property type="term" value="P:epithelial cell proliferation involved in prostate gland development"/>
    <property type="evidence" value="ECO:0000315"/>
    <property type="project" value="MGI"/>
</dbReference>
<dbReference type="GO" id="GO:0001822">
    <property type="term" value="P:kidney development"/>
    <property type="evidence" value="ECO:0007669"/>
    <property type="project" value="Ensembl"/>
</dbReference>
<dbReference type="GO" id="GO:0016525">
    <property type="term" value="P:negative regulation of angiogenesis"/>
    <property type="evidence" value="ECO:0000314"/>
    <property type="project" value="UniProtKB"/>
</dbReference>
<dbReference type="GO" id="GO:0010596">
    <property type="term" value="P:negative regulation of endothelial cell migration"/>
    <property type="evidence" value="ECO:0007669"/>
    <property type="project" value="Ensembl"/>
</dbReference>
<dbReference type="GO" id="GO:0060770">
    <property type="term" value="P:negative regulation of epithelial cell proliferation involved in prostate gland development"/>
    <property type="evidence" value="ECO:0000315"/>
    <property type="project" value="MGI"/>
</dbReference>
<dbReference type="GO" id="GO:0010629">
    <property type="term" value="P:negative regulation of gene expression"/>
    <property type="evidence" value="ECO:0007669"/>
    <property type="project" value="Ensembl"/>
</dbReference>
<dbReference type="GO" id="GO:0042698">
    <property type="term" value="P:ovulation cycle"/>
    <property type="evidence" value="ECO:0007669"/>
    <property type="project" value="Ensembl"/>
</dbReference>
<dbReference type="GO" id="GO:0050769">
    <property type="term" value="P:positive regulation of neurogenesis"/>
    <property type="evidence" value="ECO:0000250"/>
    <property type="project" value="UniProtKB"/>
</dbReference>
<dbReference type="GO" id="GO:0010976">
    <property type="term" value="P:positive regulation of neuron projection development"/>
    <property type="evidence" value="ECO:0007669"/>
    <property type="project" value="Ensembl"/>
</dbReference>
<dbReference type="GO" id="GO:0010447">
    <property type="term" value="P:response to acidic pH"/>
    <property type="evidence" value="ECO:0007669"/>
    <property type="project" value="Ensembl"/>
</dbReference>
<dbReference type="GO" id="GO:0046685">
    <property type="term" value="P:response to arsenic-containing substance"/>
    <property type="evidence" value="ECO:0007669"/>
    <property type="project" value="Ensembl"/>
</dbReference>
<dbReference type="GO" id="GO:1901652">
    <property type="term" value="P:response to peptide"/>
    <property type="evidence" value="ECO:0007669"/>
    <property type="project" value="Ensembl"/>
</dbReference>
<dbReference type="GO" id="GO:0060041">
    <property type="term" value="P:retina development in camera-type eye"/>
    <property type="evidence" value="ECO:0007669"/>
    <property type="project" value="Ensembl"/>
</dbReference>
<dbReference type="GO" id="GO:0007614">
    <property type="term" value="P:short-term memory"/>
    <property type="evidence" value="ECO:0007669"/>
    <property type="project" value="Ensembl"/>
</dbReference>
<dbReference type="CDD" id="cd02052">
    <property type="entry name" value="serpinF1_PEDF"/>
    <property type="match status" value="1"/>
</dbReference>
<dbReference type="FunFam" id="3.30.497.10:FF:000003">
    <property type="entry name" value="Serpin family F member 1"/>
    <property type="match status" value="1"/>
</dbReference>
<dbReference type="Gene3D" id="2.30.39.10">
    <property type="entry name" value="Alpha-1-antitrypsin, domain 1"/>
    <property type="match status" value="1"/>
</dbReference>
<dbReference type="Gene3D" id="3.30.497.10">
    <property type="entry name" value="Antithrombin, subunit I, domain 2"/>
    <property type="match status" value="1"/>
</dbReference>
<dbReference type="InterPro" id="IPR033832">
    <property type="entry name" value="PEDF_serpin_dom"/>
</dbReference>
<dbReference type="InterPro" id="IPR023795">
    <property type="entry name" value="Serpin_CS"/>
</dbReference>
<dbReference type="InterPro" id="IPR023796">
    <property type="entry name" value="Serpin_dom"/>
</dbReference>
<dbReference type="InterPro" id="IPR000215">
    <property type="entry name" value="Serpin_fam"/>
</dbReference>
<dbReference type="InterPro" id="IPR036186">
    <property type="entry name" value="Serpin_sf"/>
</dbReference>
<dbReference type="InterPro" id="IPR042178">
    <property type="entry name" value="Serpin_sf_1"/>
</dbReference>
<dbReference type="InterPro" id="IPR042185">
    <property type="entry name" value="Serpin_sf_2"/>
</dbReference>
<dbReference type="PANTHER" id="PTHR11461:SF84">
    <property type="entry name" value="PIGMENT EPITHELIUM-DERIVED FACTOR"/>
    <property type="match status" value="1"/>
</dbReference>
<dbReference type="PANTHER" id="PTHR11461">
    <property type="entry name" value="SERINE PROTEASE INHIBITOR, SERPIN"/>
    <property type="match status" value="1"/>
</dbReference>
<dbReference type="Pfam" id="PF00079">
    <property type="entry name" value="Serpin"/>
    <property type="match status" value="1"/>
</dbReference>
<dbReference type="SMART" id="SM00093">
    <property type="entry name" value="SERPIN"/>
    <property type="match status" value="1"/>
</dbReference>
<dbReference type="SUPFAM" id="SSF56574">
    <property type="entry name" value="Serpins"/>
    <property type="match status" value="1"/>
</dbReference>
<dbReference type="PROSITE" id="PS00284">
    <property type="entry name" value="SERPIN"/>
    <property type="match status" value="1"/>
</dbReference>
<keyword id="KW-0002">3D-structure</keyword>
<keyword id="KW-0903">Direct protein sequencing</keyword>
<keyword id="KW-0325">Glycoprotein</keyword>
<keyword id="KW-0597">Phosphoprotein</keyword>
<keyword id="KW-0873">Pyrrolidone carboxylic acid</keyword>
<keyword id="KW-1185">Reference proteome</keyword>
<keyword id="KW-0964">Secreted</keyword>
<keyword id="KW-0732">Signal</keyword>
<reference key="1">
    <citation type="journal article" date="1996" name="Genomics">
        <title>Characterization of novel secreted and membrane proteins isolated by the signal sequence trap method.</title>
        <authorList>
            <person name="Shirozu M."/>
            <person name="Tada H."/>
            <person name="Tashiro K."/>
            <person name="Nakamura T."/>
            <person name="Lopez N.D."/>
            <person name="Nazarea M."/>
            <person name="Hamada T."/>
            <person name="Sato T."/>
            <person name="Nakano T."/>
            <person name="Honjo T."/>
        </authorList>
    </citation>
    <scope>NUCLEOTIDE SEQUENCE [MRNA]</scope>
</reference>
<reference key="2">
    <citation type="journal article" date="1998" name="J. Biol. Chem.">
        <title>Isolation, purification and characterization of a collagen-associated serpin, caspin, produced by murine colon adenocarcinoma cells.</title>
        <authorList>
            <person name="Kozaki K."/>
            <person name="Miyaishi O."/>
            <person name="Koiwai O."/>
            <person name="Yasui Y."/>
            <person name="Kashiwai A."/>
            <person name="Nishikawa Y."/>
            <person name="Shimizu S."/>
            <person name="Saga S."/>
        </authorList>
    </citation>
    <scope>NUCLEOTIDE SEQUENCE [MRNA]</scope>
    <scope>PROTEIN SEQUENCE OF 53-66; 252-261; 333-344 AND 359-372</scope>
    <scope>TISSUE SPECIFICITY</scope>
    <scope>DEVELOPMENTAL STAGE</scope>
    <source>
        <strain>BALB/cJ</strain>
        <tissue>Liver</tissue>
    </source>
</reference>
<reference key="3">
    <citation type="journal article" date="1998" name="Mol. Vis.">
        <title>Structural and comparative analysis of the mouse gene for pigment epithelium-derived factor (PEDF).</title>
        <authorList>
            <person name="Singh V.K."/>
            <person name="Chader G.J."/>
            <person name="Rodriguez I.R."/>
        </authorList>
    </citation>
    <scope>NUCLEOTIDE SEQUENCE [MRNA]</scope>
    <scope>TISSUE SPECIFICITY</scope>
    <source>
        <strain>FVB/N</strain>
        <tissue>Liver</tissue>
    </source>
</reference>
<reference key="4">
    <citation type="submission" date="1998-10" db="EMBL/GenBank/DDBJ databases">
        <authorList>
            <person name="Tombran-Tink J."/>
        </authorList>
    </citation>
    <scope>NUCLEOTIDE SEQUENCE</scope>
    <source>
        <strain>BALB/cJ</strain>
    </source>
</reference>
<reference key="5">
    <citation type="journal article" date="2004" name="Genome Res.">
        <title>The status, quality, and expansion of the NIH full-length cDNA project: the Mammalian Gene Collection (MGC).</title>
        <authorList>
            <consortium name="The MGC Project Team"/>
        </authorList>
    </citation>
    <scope>NUCLEOTIDE SEQUENCE [LARGE SCALE MRNA]</scope>
    <source>
        <strain>FVB/N</strain>
        <tissue>Liver</tissue>
    </source>
</reference>
<reference key="6">
    <citation type="journal article" date="2003" name="J. Pediatr. Surg.">
        <title>Wilms' tumor growth is suppressed by antiangiogenic pigment epithelium-derived factor in a xenograft model.</title>
        <authorList>
            <person name="Abramson L.P."/>
            <person name="Stellmach V."/>
            <person name="Doll J.A."/>
            <person name="Cornwell M."/>
            <person name="Arensman R.M."/>
            <person name="Crawford S.E."/>
        </authorList>
    </citation>
    <scope>FUNCTION</scope>
</reference>
<reference key="7">
    <citation type="journal article" date="2010" name="Cell">
        <title>A tissue-specific atlas of mouse protein phosphorylation and expression.</title>
        <authorList>
            <person name="Huttlin E.L."/>
            <person name="Jedrychowski M.P."/>
            <person name="Elias J.E."/>
            <person name="Goswami T."/>
            <person name="Rad R."/>
            <person name="Beausoleil S.A."/>
            <person name="Villen J."/>
            <person name="Haas W."/>
            <person name="Sowa M.E."/>
            <person name="Gygi S.P."/>
        </authorList>
    </citation>
    <scope>IDENTIFICATION BY MASS SPECTROMETRY [LARGE SCALE ANALYSIS]</scope>
    <source>
        <tissue>Brown adipose tissue</tissue>
        <tissue>Kidney</tissue>
        <tissue>Lung</tissue>
        <tissue>Spleen</tissue>
    </source>
</reference>
<organism>
    <name type="scientific">Mus musculus</name>
    <name type="common">Mouse</name>
    <dbReference type="NCBI Taxonomy" id="10090"/>
    <lineage>
        <taxon>Eukaryota</taxon>
        <taxon>Metazoa</taxon>
        <taxon>Chordata</taxon>
        <taxon>Craniata</taxon>
        <taxon>Vertebrata</taxon>
        <taxon>Euteleostomi</taxon>
        <taxon>Mammalia</taxon>
        <taxon>Eutheria</taxon>
        <taxon>Euarchontoglires</taxon>
        <taxon>Glires</taxon>
        <taxon>Rodentia</taxon>
        <taxon>Myomorpha</taxon>
        <taxon>Muroidea</taxon>
        <taxon>Muridae</taxon>
        <taxon>Murinae</taxon>
        <taxon>Mus</taxon>
        <taxon>Mus</taxon>
    </lineage>
</organism>
<proteinExistence type="evidence at protein level"/>
<evidence type="ECO:0000250" key="1"/>
<evidence type="ECO:0000250" key="2">
    <source>
        <dbReference type="UniProtKB" id="P36955"/>
    </source>
</evidence>
<evidence type="ECO:0000255" key="3"/>
<evidence type="ECO:0000256" key="4">
    <source>
        <dbReference type="SAM" id="MobiDB-lite"/>
    </source>
</evidence>
<evidence type="ECO:0000269" key="5">
    <source>
    </source>
</evidence>
<evidence type="ECO:0000269" key="6">
    <source>
    </source>
</evidence>
<evidence type="ECO:0000269" key="7">
    <source>
    </source>
</evidence>
<evidence type="ECO:0000305" key="8"/>
<evidence type="ECO:0007829" key="9">
    <source>
        <dbReference type="PDB" id="6LOS"/>
    </source>
</evidence>
<comment type="function">
    <text evidence="5">Neurotrophic protein; induces extensive neuronal differentiation in retinoblastoma cells. Potent inhibitor of angiogenesis. As it does not undergo the S (stressed) to R (relaxed) conformational transition characteristic of active serpins, it exhibits no serine protease inhibitory activity.</text>
</comment>
<comment type="subunit">
    <text evidence="2">Interacts with PNPLA2; this interaction stimulates the phospholipase A2 activity of PNPLA2.</text>
</comment>
<comment type="subcellular location">
    <subcellularLocation>
        <location>Secreted</location>
    </subcellularLocation>
    <subcellularLocation>
        <location evidence="1">Melanosome</location>
    </subcellularLocation>
</comment>
<comment type="tissue specificity">
    <text evidence="6 7">Highly expressed in the liver, gastric glandular mucosa and renal tubules. It is also expressed in the brain, heart, lung retina and testes.</text>
</comment>
<comment type="developmental stage">
    <text evidence="7">First detected at 12.5 dpc in cartilage primordium, it is present in the osseous matrix of developing limbs, vertebrae, ribs and skull. At 16.5 dpc it is detected in bone matrix and smooth muscle, and at lower levels in connective tissue, bronchial epithelial cells, metanephron microtubules, and skin.</text>
</comment>
<comment type="similarity">
    <text evidence="8">Belongs to the serpin family.</text>
</comment>
<sequence>MQALVLLLWTGALLGHGSSQNVPSSSEGSPVPDSTGEPVEEEDPFFKVPVNKLAAAVSNFGYDLYRLRSSASPTGNVLLSPLSVATALSALSLGAEHRTESVIHRALYYDLITNPDIHSTYKELLASVTAPEKNLKSASRIVFERKLRVKSSFVAPLEKSYGTRPRILTGNPRVDLQEINNWVQAQMKGKIARSTREMPSALSILLLGVAYFKGQWVTKFDSRKTTLQDFHLDEDRTVRVPMMSDPKAILRYGLDSDLNCKIAQLPLTGSMSIIFFLPLTVTQNLTMIEESLTSEFIHDIDRELKTIQAVLTVPKLKLSFEGELTKSLQDMKLQSLFESPDFSKITGKPVKLTQVEHRAAFEWNEEGAGSSPSPGLQPVRLTFPLDYHLNQPFLFVLRDTDTGALLFIGRILDPSST</sequence>
<gene>
    <name type="primary">Serpinf1</name>
    <name type="synonym">Pedf</name>
    <name type="synonym">Sdf3</name>
</gene>
<feature type="signal peptide" evidence="1">
    <location>
        <begin position="1"/>
        <end position="19"/>
    </location>
</feature>
<feature type="chain" id="PRO_0000032509" description="Pigment epithelium-derived factor">
    <location>
        <begin position="20"/>
        <end position="417"/>
    </location>
</feature>
<feature type="region of interest" description="Disordered" evidence="4">
    <location>
        <begin position="17"/>
        <end position="41"/>
    </location>
</feature>
<feature type="compositionally biased region" description="Polar residues" evidence="4">
    <location>
        <begin position="18"/>
        <end position="28"/>
    </location>
</feature>
<feature type="modified residue" description="Pyrrolidone carboxylic acid" evidence="2">
    <location>
        <position position="20"/>
    </location>
</feature>
<feature type="modified residue" description="Phosphoserine" evidence="2">
    <location>
        <position position="24"/>
    </location>
</feature>
<feature type="glycosylation site" description="N-linked (GlcNAc...) asparagine" evidence="3">
    <location>
        <position position="284"/>
    </location>
</feature>
<feature type="sequence conflict" description="In Ref. 4; AAC69271." evidence="8" ref="4">
    <original>S</original>
    <variation>G</variation>
    <location>
        <position position="70"/>
    </location>
</feature>
<feature type="sequence conflict" description="In Ref. 2; BAA31978." evidence="8" ref="2">
    <original>K</original>
    <variation>N</variation>
    <location>
        <position position="136"/>
    </location>
</feature>
<feature type="sequence conflict" description="In Ref. 4; AAC69271." evidence="8" ref="4">
    <original>S</original>
    <variation>R</variation>
    <location>
        <position position="137"/>
    </location>
</feature>
<feature type="sequence conflict" description="In Ref. 1; BAA09051." evidence="8" ref="1">
    <original>T</original>
    <variation>A</variation>
    <location>
        <position position="280"/>
    </location>
</feature>
<feature type="sequence conflict" description="In Ref. 4; AAC69271." evidence="8" ref="4">
    <original>Q</original>
    <variation>L</variation>
    <location>
        <position position="377"/>
    </location>
</feature>
<feature type="helix" evidence="9">
    <location>
        <begin position="44"/>
        <end position="47"/>
    </location>
</feature>
<feature type="helix" evidence="9">
    <location>
        <begin position="49"/>
        <end position="70"/>
    </location>
</feature>
<feature type="strand" evidence="9">
    <location>
        <begin position="73"/>
        <end position="75"/>
    </location>
</feature>
<feature type="strand" evidence="9">
    <location>
        <begin position="77"/>
        <end position="79"/>
    </location>
</feature>
<feature type="helix" evidence="9">
    <location>
        <begin position="81"/>
        <end position="91"/>
    </location>
</feature>
<feature type="helix" evidence="9">
    <location>
        <begin position="92"/>
        <end position="94"/>
    </location>
</feature>
<feature type="helix" evidence="9">
    <location>
        <begin position="97"/>
        <end position="106"/>
    </location>
</feature>
<feature type="helix" evidence="9">
    <location>
        <begin position="117"/>
        <end position="128"/>
    </location>
</feature>
<feature type="helix" evidence="9">
    <location>
        <begin position="131"/>
        <end position="133"/>
    </location>
</feature>
<feature type="strand" evidence="9">
    <location>
        <begin position="135"/>
        <end position="143"/>
    </location>
</feature>
<feature type="helix" evidence="9">
    <location>
        <begin position="151"/>
        <end position="161"/>
    </location>
</feature>
<feature type="helix" evidence="9">
    <location>
        <begin position="172"/>
        <end position="186"/>
    </location>
</feature>
<feature type="turn" evidence="9">
    <location>
        <begin position="187"/>
        <end position="189"/>
    </location>
</feature>
<feature type="strand" evidence="9">
    <location>
        <begin position="203"/>
        <end position="213"/>
    </location>
</feature>
<feature type="strand" evidence="9">
    <location>
        <begin position="216"/>
        <end position="218"/>
    </location>
</feature>
<feature type="helix" evidence="9">
    <location>
        <begin position="222"/>
        <end position="224"/>
    </location>
</feature>
<feature type="strand" evidence="9">
    <location>
        <begin position="226"/>
        <end position="230"/>
    </location>
</feature>
<feature type="strand" evidence="9">
    <location>
        <begin position="232"/>
        <end position="235"/>
    </location>
</feature>
<feature type="strand" evidence="9">
    <location>
        <begin position="238"/>
        <end position="255"/>
    </location>
</feature>
<feature type="turn" evidence="9">
    <location>
        <begin position="256"/>
        <end position="259"/>
    </location>
</feature>
<feature type="strand" evidence="9">
    <location>
        <begin position="260"/>
        <end position="267"/>
    </location>
</feature>
<feature type="turn" evidence="9">
    <location>
        <begin position="268"/>
        <end position="270"/>
    </location>
</feature>
<feature type="strand" evidence="9">
    <location>
        <begin position="271"/>
        <end position="280"/>
    </location>
</feature>
<feature type="helix" evidence="9">
    <location>
        <begin position="286"/>
        <end position="289"/>
    </location>
</feature>
<feature type="helix" evidence="9">
    <location>
        <begin position="294"/>
        <end position="303"/>
    </location>
</feature>
<feature type="strand" evidence="9">
    <location>
        <begin position="305"/>
        <end position="314"/>
    </location>
</feature>
<feature type="strand" evidence="9">
    <location>
        <begin position="316"/>
        <end position="323"/>
    </location>
</feature>
<feature type="helix" evidence="9">
    <location>
        <begin position="325"/>
        <end position="329"/>
    </location>
</feature>
<feature type="turn" evidence="9">
    <location>
        <begin position="330"/>
        <end position="333"/>
    </location>
</feature>
<feature type="helix" evidence="9">
    <location>
        <begin position="334"/>
        <end position="337"/>
    </location>
</feature>
<feature type="turn" evidence="9">
    <location>
        <begin position="343"/>
        <end position="345"/>
    </location>
</feature>
<feature type="strand" evidence="9">
    <location>
        <begin position="352"/>
        <end position="363"/>
    </location>
</feature>
<feature type="strand" evidence="9">
    <location>
        <begin position="367"/>
        <end position="369"/>
    </location>
</feature>
<feature type="strand" evidence="9">
    <location>
        <begin position="385"/>
        <end position="388"/>
    </location>
</feature>
<feature type="strand" evidence="9">
    <location>
        <begin position="393"/>
        <end position="399"/>
    </location>
</feature>
<feature type="turn" evidence="9">
    <location>
        <begin position="400"/>
        <end position="402"/>
    </location>
</feature>
<feature type="strand" evidence="9">
    <location>
        <begin position="405"/>
        <end position="412"/>
    </location>
</feature>
<accession>P97298</accession>
<accession>O70629</accession>
<accession>O88691</accession>